<protein>
    <recommendedName>
        <fullName>GPI transamidase component GAB1 homolog</fullName>
    </recommendedName>
</protein>
<organism>
    <name type="scientific">Schizosaccharomyces pombe (strain 972 / ATCC 24843)</name>
    <name type="common">Fission yeast</name>
    <dbReference type="NCBI Taxonomy" id="284812"/>
    <lineage>
        <taxon>Eukaryota</taxon>
        <taxon>Fungi</taxon>
        <taxon>Dikarya</taxon>
        <taxon>Ascomycota</taxon>
        <taxon>Taphrinomycotina</taxon>
        <taxon>Schizosaccharomycetes</taxon>
        <taxon>Schizosaccharomycetales</taxon>
        <taxon>Schizosaccharomycetaceae</taxon>
        <taxon>Schizosaccharomyces</taxon>
    </lineage>
</organism>
<comment type="function">
    <text evidence="1">Component of the GPI transamidase complex. May be involved in the recognition of either the GPI attachment signal or the lipid portion of GPI (By similarity).</text>
</comment>
<comment type="pathway">
    <text>Glycolipid biosynthesis; glycosylphosphatidylinositol-anchor biosynthesis.</text>
</comment>
<comment type="subunit">
    <text evidence="1">Forms a complex with PIG-S homolog, PIG-T homolog and GPI8.</text>
</comment>
<comment type="subcellular location">
    <subcellularLocation>
        <location evidence="3">Endoplasmic reticulum membrane</location>
        <topology evidence="3">Multi-pass membrane protein</topology>
    </subcellularLocation>
</comment>
<comment type="similarity">
    <text evidence="3">Belongs to the PIGU family.</text>
</comment>
<name>PIGU_SCHPO</name>
<reference key="1">
    <citation type="journal article" date="2002" name="Nature">
        <title>The genome sequence of Schizosaccharomyces pombe.</title>
        <authorList>
            <person name="Wood V."/>
            <person name="Gwilliam R."/>
            <person name="Rajandream M.A."/>
            <person name="Lyne M.H."/>
            <person name="Lyne R."/>
            <person name="Stewart A."/>
            <person name="Sgouros J.G."/>
            <person name="Peat N."/>
            <person name="Hayles J."/>
            <person name="Baker S.G."/>
            <person name="Basham D."/>
            <person name="Bowman S."/>
            <person name="Brooks K."/>
            <person name="Brown D."/>
            <person name="Brown S."/>
            <person name="Chillingworth T."/>
            <person name="Churcher C.M."/>
            <person name="Collins M."/>
            <person name="Connor R."/>
            <person name="Cronin A."/>
            <person name="Davis P."/>
            <person name="Feltwell T."/>
            <person name="Fraser A."/>
            <person name="Gentles S."/>
            <person name="Goble A."/>
            <person name="Hamlin N."/>
            <person name="Harris D.E."/>
            <person name="Hidalgo J."/>
            <person name="Hodgson G."/>
            <person name="Holroyd S."/>
            <person name="Hornsby T."/>
            <person name="Howarth S."/>
            <person name="Huckle E.J."/>
            <person name="Hunt S."/>
            <person name="Jagels K."/>
            <person name="James K.D."/>
            <person name="Jones L."/>
            <person name="Jones M."/>
            <person name="Leather S."/>
            <person name="McDonald S."/>
            <person name="McLean J."/>
            <person name="Mooney P."/>
            <person name="Moule S."/>
            <person name="Mungall K.L."/>
            <person name="Murphy L.D."/>
            <person name="Niblett D."/>
            <person name="Odell C."/>
            <person name="Oliver K."/>
            <person name="O'Neil S."/>
            <person name="Pearson D."/>
            <person name="Quail M.A."/>
            <person name="Rabbinowitsch E."/>
            <person name="Rutherford K.M."/>
            <person name="Rutter S."/>
            <person name="Saunders D."/>
            <person name="Seeger K."/>
            <person name="Sharp S."/>
            <person name="Skelton J."/>
            <person name="Simmonds M.N."/>
            <person name="Squares R."/>
            <person name="Squares S."/>
            <person name="Stevens K."/>
            <person name="Taylor K."/>
            <person name="Taylor R.G."/>
            <person name="Tivey A."/>
            <person name="Walsh S.V."/>
            <person name="Warren T."/>
            <person name="Whitehead S."/>
            <person name="Woodward J.R."/>
            <person name="Volckaert G."/>
            <person name="Aert R."/>
            <person name="Robben J."/>
            <person name="Grymonprez B."/>
            <person name="Weltjens I."/>
            <person name="Vanstreels E."/>
            <person name="Rieger M."/>
            <person name="Schaefer M."/>
            <person name="Mueller-Auer S."/>
            <person name="Gabel C."/>
            <person name="Fuchs M."/>
            <person name="Duesterhoeft A."/>
            <person name="Fritzc C."/>
            <person name="Holzer E."/>
            <person name="Moestl D."/>
            <person name="Hilbert H."/>
            <person name="Borzym K."/>
            <person name="Langer I."/>
            <person name="Beck A."/>
            <person name="Lehrach H."/>
            <person name="Reinhardt R."/>
            <person name="Pohl T.M."/>
            <person name="Eger P."/>
            <person name="Zimmermann W."/>
            <person name="Wedler H."/>
            <person name="Wambutt R."/>
            <person name="Purnelle B."/>
            <person name="Goffeau A."/>
            <person name="Cadieu E."/>
            <person name="Dreano S."/>
            <person name="Gloux S."/>
            <person name="Lelaure V."/>
            <person name="Mottier S."/>
            <person name="Galibert F."/>
            <person name="Aves S.J."/>
            <person name="Xiang Z."/>
            <person name="Hunt C."/>
            <person name="Moore K."/>
            <person name="Hurst S.M."/>
            <person name="Lucas M."/>
            <person name="Rochet M."/>
            <person name="Gaillardin C."/>
            <person name="Tallada V.A."/>
            <person name="Garzon A."/>
            <person name="Thode G."/>
            <person name="Daga R.R."/>
            <person name="Cruzado L."/>
            <person name="Jimenez J."/>
            <person name="Sanchez M."/>
            <person name="del Rey F."/>
            <person name="Benito J."/>
            <person name="Dominguez A."/>
            <person name="Revuelta J.L."/>
            <person name="Moreno S."/>
            <person name="Armstrong J."/>
            <person name="Forsburg S.L."/>
            <person name="Cerutti L."/>
            <person name="Lowe T."/>
            <person name="McCombie W.R."/>
            <person name="Paulsen I."/>
            <person name="Potashkin J."/>
            <person name="Shpakovski G.V."/>
            <person name="Ussery D."/>
            <person name="Barrell B.G."/>
            <person name="Nurse P."/>
        </authorList>
    </citation>
    <scope>NUCLEOTIDE SEQUENCE [LARGE SCALE GENOMIC DNA]</scope>
    <source>
        <strain>972 / ATCC 24843</strain>
    </source>
</reference>
<proteinExistence type="inferred from homology"/>
<gene>
    <name type="ORF">SPAC1952.01</name>
    <name type="ORF">SPAC1B3.19</name>
</gene>
<keyword id="KW-0256">Endoplasmic reticulum</keyword>
<keyword id="KW-0337">GPI-anchor biosynthesis</keyword>
<keyword id="KW-0472">Membrane</keyword>
<keyword id="KW-1185">Reference proteome</keyword>
<keyword id="KW-0812">Transmembrane</keyword>
<keyword id="KW-1133">Transmembrane helix</keyword>
<dbReference type="EMBL" id="CU329670">
    <property type="protein sequence ID" value="CAB11245.2"/>
    <property type="molecule type" value="Genomic_DNA"/>
</dbReference>
<dbReference type="PIR" id="T37929">
    <property type="entry name" value="T37929"/>
</dbReference>
<dbReference type="RefSeq" id="XP_001713115.1">
    <property type="nucleotide sequence ID" value="XM_001713063.2"/>
</dbReference>
<dbReference type="SMR" id="O13883"/>
<dbReference type="BioGRID" id="280615">
    <property type="interactions" value="2"/>
</dbReference>
<dbReference type="ComplexPortal" id="CPX-10141">
    <property type="entry name" value="GPI-anchor transamidase complex"/>
</dbReference>
<dbReference type="FunCoup" id="O13883">
    <property type="interactions" value="531"/>
</dbReference>
<dbReference type="STRING" id="284812.O13883"/>
<dbReference type="PaxDb" id="4896-SPAC1952.01.1"/>
<dbReference type="EnsemblFungi" id="SPAC1952.01.1">
    <property type="protein sequence ID" value="SPAC1952.01.1:pep"/>
    <property type="gene ID" value="SPAC1952.01"/>
</dbReference>
<dbReference type="PomBase" id="SPAC1952.01"/>
<dbReference type="VEuPathDB" id="FungiDB:SPAC1952.01"/>
<dbReference type="eggNOG" id="KOG2552">
    <property type="taxonomic scope" value="Eukaryota"/>
</dbReference>
<dbReference type="HOGENOM" id="CLU_030193_0_0_1"/>
<dbReference type="InParanoid" id="O13883"/>
<dbReference type="OMA" id="ALWHLWI"/>
<dbReference type="PhylomeDB" id="O13883"/>
<dbReference type="UniPathway" id="UPA00196"/>
<dbReference type="PRO" id="PR:O13883"/>
<dbReference type="Proteomes" id="UP000002485">
    <property type="component" value="Chromosome I"/>
</dbReference>
<dbReference type="GO" id="GO:0005783">
    <property type="term" value="C:endoplasmic reticulum"/>
    <property type="evidence" value="ECO:0007005"/>
    <property type="project" value="PomBase"/>
</dbReference>
<dbReference type="GO" id="GO:0042765">
    <property type="term" value="C:GPI-anchor transamidase complex"/>
    <property type="evidence" value="ECO:0000318"/>
    <property type="project" value="GO_Central"/>
</dbReference>
<dbReference type="GO" id="GO:0016255">
    <property type="term" value="P:attachment of GPI anchor to protein"/>
    <property type="evidence" value="ECO:0000318"/>
    <property type="project" value="GO_Central"/>
</dbReference>
<dbReference type="GO" id="GO:0006506">
    <property type="term" value="P:GPI anchor biosynthetic process"/>
    <property type="evidence" value="ECO:0007669"/>
    <property type="project" value="UniProtKB-UniPathway"/>
</dbReference>
<dbReference type="InterPro" id="IPR009600">
    <property type="entry name" value="PIG-U"/>
</dbReference>
<dbReference type="PANTHER" id="PTHR13121">
    <property type="entry name" value="GPI TRANSAMIDASE COMPONENT PIG-U"/>
    <property type="match status" value="1"/>
</dbReference>
<dbReference type="PANTHER" id="PTHR13121:SF0">
    <property type="entry name" value="PHOSPHATIDYLINOSITOL GLYCAN ANCHOR BIOSYNTHESIS CLASS U PROTEIN"/>
    <property type="match status" value="1"/>
</dbReference>
<dbReference type="Pfam" id="PF06728">
    <property type="entry name" value="PIG-U"/>
    <property type="match status" value="1"/>
</dbReference>
<feature type="chain" id="PRO_0000121397" description="GPI transamidase component GAB1 homolog">
    <location>
        <begin position="1"/>
        <end position="408"/>
    </location>
</feature>
<feature type="transmembrane region" description="Helical" evidence="2">
    <location>
        <begin position="9"/>
        <end position="29"/>
    </location>
</feature>
<feature type="transmembrane region" description="Helical" evidence="2">
    <location>
        <begin position="66"/>
        <end position="86"/>
    </location>
</feature>
<feature type="transmembrane region" description="Helical" evidence="2">
    <location>
        <begin position="88"/>
        <end position="108"/>
    </location>
</feature>
<feature type="transmembrane region" description="Helical" evidence="2">
    <location>
        <begin position="125"/>
        <end position="145"/>
    </location>
</feature>
<feature type="transmembrane region" description="Helical" evidence="2">
    <location>
        <begin position="149"/>
        <end position="169"/>
    </location>
</feature>
<feature type="transmembrane region" description="Helical" evidence="2">
    <location>
        <begin position="207"/>
        <end position="227"/>
    </location>
</feature>
<feature type="transmembrane region" description="Helical" evidence="2">
    <location>
        <begin position="266"/>
        <end position="286"/>
    </location>
</feature>
<feature type="transmembrane region" description="Helical" evidence="2">
    <location>
        <begin position="303"/>
        <end position="323"/>
    </location>
</feature>
<feature type="transmembrane region" description="Helical" evidence="2">
    <location>
        <begin position="339"/>
        <end position="359"/>
    </location>
</feature>
<feature type="transmembrane region" description="Helical" evidence="2">
    <location>
        <begin position="370"/>
        <end position="390"/>
    </location>
</feature>
<feature type="region of interest" description="May be involved in recognition of long-chain fatty acids in GPI" evidence="1">
    <location>
        <begin position="247"/>
        <end position="267"/>
    </location>
</feature>
<accession>O13883</accession>
<accession>Q9UUK5</accession>
<sequence>MIPNEKLKLLGLLSISFFLQWYLANTWIAEFLYRRIEVSTPVSGFLRVREGLYLYENGLDPYSGGVFYQSPLLLILNYCCELLGGISVTRFVYTSISTMGGLFVYLIAKQARVLDPNQVLSTCSPLWISVIYLLNPLTFLPGIACSADMILNFTTLMTIYFASCGSYAIYACCMALTVFINPNALLLFFPSYLILRKCNSSIKFRQIFVVFLFYLAGLIITSGFFLNSLSFLKIPFRVYLDSHDLTPNLGLWWYFFTEMFNEFRTFFLFVFAILPLMFVLPVSIRLYYLPLPITIALIGLHSLFKAYPSICDLSIFLSLLPIFNKVQDRMRYSLLTNNAIVFALVLGSAFYHSWITLGCGNANFYYASNLILALGLSLKIMDFLKALLLVDWYANHPQHENIPLKQVQ</sequence>
<evidence type="ECO:0000250" key="1"/>
<evidence type="ECO:0000255" key="2"/>
<evidence type="ECO:0000305" key="3"/>